<reference key="1">
    <citation type="journal article" date="1992" name="EMBO J.">
        <title>An archaebacterial terminal oxidase combines core structures of two mitochondrial respiratory complexes.</title>
        <authorList>
            <person name="Luebben M."/>
            <person name="Kolmerer B."/>
            <person name="Saraste M."/>
        </authorList>
    </citation>
    <scope>NUCLEOTIDE SEQUENCE [GENOMIC DNA]</scope>
    <source>
        <strain>ATCC 33909 / DSM 639 / JCM 8929 / NBRC 15157 / NCIMB 11770</strain>
    </source>
</reference>
<reference key="2">
    <citation type="journal article" date="2005" name="J. Bacteriol.">
        <title>The genome of Sulfolobus acidocaldarius, a model organism of the Crenarchaeota.</title>
        <authorList>
            <person name="Chen L."/>
            <person name="Bruegger K."/>
            <person name="Skovgaard M."/>
            <person name="Redder P."/>
            <person name="She Q."/>
            <person name="Torarinsson E."/>
            <person name="Greve B."/>
            <person name="Awayez M."/>
            <person name="Zibat A."/>
            <person name="Klenk H.-P."/>
            <person name="Garrett R.A."/>
        </authorList>
    </citation>
    <scope>NUCLEOTIDE SEQUENCE [LARGE SCALE GENOMIC DNA]</scope>
    <source>
        <strain>ATCC 33909 / DSM 639 / JCM 8929 / NBRC 15157 / NCIMB 11770</strain>
    </source>
</reference>
<feature type="chain" id="PRO_0000066077" description="Uncharacterized protein Saci_2086">
    <location>
        <begin position="1"/>
        <end position="40"/>
    </location>
</feature>
<proteinExistence type="predicted"/>
<keyword id="KW-1185">Reference proteome</keyword>
<dbReference type="EMBL" id="X62643">
    <property type="protein sequence ID" value="CAA44512.1"/>
    <property type="molecule type" value="Genomic_DNA"/>
</dbReference>
<dbReference type="EMBL" id="CP000077">
    <property type="protein sequence ID" value="AAY81380.1"/>
    <property type="molecule type" value="Genomic_DNA"/>
</dbReference>
<dbReference type="PIR" id="S21044">
    <property type="entry name" value="S21044"/>
</dbReference>
<dbReference type="RefSeq" id="WP_011278882.1">
    <property type="nucleotide sequence ID" value="NC_007181.1"/>
</dbReference>
<dbReference type="SMR" id="P39477"/>
<dbReference type="STRING" id="330779.Saci_2086"/>
<dbReference type="GeneID" id="77093609"/>
<dbReference type="KEGG" id="sai:Saci_2086"/>
<dbReference type="PATRIC" id="fig|330779.12.peg.2088"/>
<dbReference type="eggNOG" id="arCOG07257">
    <property type="taxonomic scope" value="Archaea"/>
</dbReference>
<dbReference type="HOGENOM" id="CLU_3283025_0_0_2"/>
<dbReference type="BioCyc" id="MetaCyc:MONOMER-21020"/>
<dbReference type="BRENDA" id="7.1.1.4">
    <property type="organism ID" value="6160"/>
</dbReference>
<dbReference type="Proteomes" id="UP000001018">
    <property type="component" value="Chromosome"/>
</dbReference>
<gene>
    <name type="ordered locus">Saci_2086</name>
</gene>
<sequence>MNRLGLVILGLIFGATAFMVGFMTYNLLWDSVKLITLLVR</sequence>
<accession>P39477</accession>
<accession>Q4J751</accession>
<protein>
    <recommendedName>
        <fullName>Uncharacterized protein Saci_2086</fullName>
    </recommendedName>
</protein>
<organism>
    <name type="scientific">Sulfolobus acidocaldarius (strain ATCC 33909 / DSM 639 / JCM 8929 / NBRC 15157 / NCIMB 11770)</name>
    <dbReference type="NCBI Taxonomy" id="330779"/>
    <lineage>
        <taxon>Archaea</taxon>
        <taxon>Thermoproteota</taxon>
        <taxon>Thermoprotei</taxon>
        <taxon>Sulfolobales</taxon>
        <taxon>Sulfolobaceae</taxon>
        <taxon>Sulfolobus</taxon>
    </lineage>
</organism>
<name>Y2086_SULAC</name>